<evidence type="ECO:0000255" key="1">
    <source>
        <dbReference type="HAMAP-Rule" id="MF_00201"/>
    </source>
</evidence>
<evidence type="ECO:0000305" key="2"/>
<accession>Q8RB48</accession>
<feature type="chain" id="PRO_0000205020" description="DNA repair protein RecO">
    <location>
        <begin position="1"/>
        <end position="247"/>
    </location>
</feature>
<gene>
    <name evidence="1" type="primary">recO</name>
    <name type="ordered locus">TTE0976</name>
</gene>
<organism>
    <name type="scientific">Caldanaerobacter subterraneus subsp. tengcongensis (strain DSM 15242 / JCM 11007 / NBRC 100824 / MB4)</name>
    <name type="common">Thermoanaerobacter tengcongensis</name>
    <dbReference type="NCBI Taxonomy" id="273068"/>
    <lineage>
        <taxon>Bacteria</taxon>
        <taxon>Bacillati</taxon>
        <taxon>Bacillota</taxon>
        <taxon>Clostridia</taxon>
        <taxon>Thermoanaerobacterales</taxon>
        <taxon>Thermoanaerobacteraceae</taxon>
        <taxon>Caldanaerobacter</taxon>
    </lineage>
</organism>
<comment type="function">
    <text evidence="1">Involved in DNA repair and RecF pathway recombination.</text>
</comment>
<comment type="similarity">
    <text evidence="1">Belongs to the RecO family.</text>
</comment>
<comment type="sequence caution" evidence="2">
    <conflict type="erroneous initiation">
        <sequence resource="EMBL-CDS" id="AAM24231"/>
    </conflict>
</comment>
<reference key="1">
    <citation type="journal article" date="2002" name="Genome Res.">
        <title>A complete sequence of the T. tengcongensis genome.</title>
        <authorList>
            <person name="Bao Q."/>
            <person name="Tian Y."/>
            <person name="Li W."/>
            <person name="Xu Z."/>
            <person name="Xuan Z."/>
            <person name="Hu S."/>
            <person name="Dong W."/>
            <person name="Yang J."/>
            <person name="Chen Y."/>
            <person name="Xue Y."/>
            <person name="Xu Y."/>
            <person name="Lai X."/>
            <person name="Huang L."/>
            <person name="Dong X."/>
            <person name="Ma Y."/>
            <person name="Ling L."/>
            <person name="Tan H."/>
            <person name="Chen R."/>
            <person name="Wang J."/>
            <person name="Yu J."/>
            <person name="Yang H."/>
        </authorList>
    </citation>
    <scope>NUCLEOTIDE SEQUENCE [LARGE SCALE GENOMIC DNA]</scope>
    <source>
        <strain>DSM 15242 / JCM 11007 / NBRC 100824 / MB4</strain>
    </source>
</reference>
<name>RECO_CALS4</name>
<sequence>MRFLKTEAIVLKSNLISEKDKIATLFTRDYGKLQAVAKGARRSKSRFVNAVRPFIVANYVIFEGQNYYYIDQWELVKNFENIEKDLKKFALASYISETISRVLEEKQKNTKLYFFTKHSLEAVESLNVETSIFLFSYTLKLISLLGYMPVLDSCAVCGKKENLSYFSSSCGGAVCKDCNETCKDAKFLNKKVLKFLLYLLKAKYEKLERISVPGVIKEEADKIITEYVRTHLEMDFKSKDFAMKLSD</sequence>
<proteinExistence type="inferred from homology"/>
<dbReference type="EMBL" id="AE008691">
    <property type="protein sequence ID" value="AAM24231.1"/>
    <property type="status" value="ALT_INIT"/>
    <property type="molecule type" value="Genomic_DNA"/>
</dbReference>
<dbReference type="RefSeq" id="WP_031314067.1">
    <property type="nucleotide sequence ID" value="NZ_JANUCV010000001.1"/>
</dbReference>
<dbReference type="SMR" id="Q8RB48"/>
<dbReference type="STRING" id="273068.TTE0976"/>
<dbReference type="KEGG" id="tte:TTE0976"/>
<dbReference type="eggNOG" id="COG1381">
    <property type="taxonomic scope" value="Bacteria"/>
</dbReference>
<dbReference type="HOGENOM" id="CLU_066632_4_0_9"/>
<dbReference type="OrthoDB" id="9797083at2"/>
<dbReference type="Proteomes" id="UP000000555">
    <property type="component" value="Chromosome"/>
</dbReference>
<dbReference type="GO" id="GO:0043590">
    <property type="term" value="C:bacterial nucleoid"/>
    <property type="evidence" value="ECO:0007669"/>
    <property type="project" value="TreeGrafter"/>
</dbReference>
<dbReference type="GO" id="GO:0006310">
    <property type="term" value="P:DNA recombination"/>
    <property type="evidence" value="ECO:0007669"/>
    <property type="project" value="UniProtKB-UniRule"/>
</dbReference>
<dbReference type="GO" id="GO:0006302">
    <property type="term" value="P:double-strand break repair"/>
    <property type="evidence" value="ECO:0007669"/>
    <property type="project" value="TreeGrafter"/>
</dbReference>
<dbReference type="Gene3D" id="2.40.50.140">
    <property type="entry name" value="Nucleic acid-binding proteins"/>
    <property type="match status" value="1"/>
</dbReference>
<dbReference type="Gene3D" id="1.20.1440.120">
    <property type="entry name" value="Recombination protein O, C-terminal domain"/>
    <property type="match status" value="1"/>
</dbReference>
<dbReference type="HAMAP" id="MF_00201">
    <property type="entry name" value="RecO"/>
    <property type="match status" value="1"/>
</dbReference>
<dbReference type="InterPro" id="IPR037278">
    <property type="entry name" value="ARFGAP/RecO"/>
</dbReference>
<dbReference type="InterPro" id="IPR022572">
    <property type="entry name" value="DNA_rep/recomb_RecO_N"/>
</dbReference>
<dbReference type="InterPro" id="IPR012340">
    <property type="entry name" value="NA-bd_OB-fold"/>
</dbReference>
<dbReference type="InterPro" id="IPR003717">
    <property type="entry name" value="RecO"/>
</dbReference>
<dbReference type="InterPro" id="IPR042242">
    <property type="entry name" value="RecO_C"/>
</dbReference>
<dbReference type="NCBIfam" id="TIGR00613">
    <property type="entry name" value="reco"/>
    <property type="match status" value="1"/>
</dbReference>
<dbReference type="PANTHER" id="PTHR33991">
    <property type="entry name" value="DNA REPAIR PROTEIN RECO"/>
    <property type="match status" value="1"/>
</dbReference>
<dbReference type="PANTHER" id="PTHR33991:SF1">
    <property type="entry name" value="DNA REPAIR PROTEIN RECO"/>
    <property type="match status" value="1"/>
</dbReference>
<dbReference type="Pfam" id="PF02565">
    <property type="entry name" value="RecO_C"/>
    <property type="match status" value="1"/>
</dbReference>
<dbReference type="Pfam" id="PF11967">
    <property type="entry name" value="RecO_N"/>
    <property type="match status" value="1"/>
</dbReference>
<dbReference type="SUPFAM" id="SSF57863">
    <property type="entry name" value="ArfGap/RecO-like zinc finger"/>
    <property type="match status" value="1"/>
</dbReference>
<dbReference type="SUPFAM" id="SSF50249">
    <property type="entry name" value="Nucleic acid-binding proteins"/>
    <property type="match status" value="1"/>
</dbReference>
<protein>
    <recommendedName>
        <fullName evidence="1">DNA repair protein RecO</fullName>
    </recommendedName>
    <alternativeName>
        <fullName evidence="1">Recombination protein O</fullName>
    </alternativeName>
</protein>
<keyword id="KW-0227">DNA damage</keyword>
<keyword id="KW-0233">DNA recombination</keyword>
<keyword id="KW-0234">DNA repair</keyword>
<keyword id="KW-1185">Reference proteome</keyword>